<gene>
    <name type="primary">Emb</name>
    <name type="synonym">Gp70</name>
</gene>
<proteinExistence type="evidence at protein level"/>
<dbReference type="EMBL" id="J03535">
    <property type="protein sequence ID" value="AAA37730.1"/>
    <property type="molecule type" value="mRNA"/>
</dbReference>
<dbReference type="EMBL" id="AK079570">
    <property type="protein sequence ID" value="BAC37687.1"/>
    <property type="molecule type" value="mRNA"/>
</dbReference>
<dbReference type="EMBL" id="AK088480">
    <property type="protein sequence ID" value="BAC40381.1"/>
    <property type="molecule type" value="mRNA"/>
</dbReference>
<dbReference type="EMBL" id="AK138271">
    <property type="protein sequence ID" value="BAE23603.1"/>
    <property type="molecule type" value="mRNA"/>
</dbReference>
<dbReference type="EMBL" id="AK148540">
    <property type="protein sequence ID" value="BAE28610.1"/>
    <property type="molecule type" value="mRNA"/>
</dbReference>
<dbReference type="EMBL" id="AK150625">
    <property type="protein sequence ID" value="BAE29715.1"/>
    <property type="molecule type" value="mRNA"/>
</dbReference>
<dbReference type="EMBL" id="AK166602">
    <property type="protein sequence ID" value="BAE38887.1"/>
    <property type="molecule type" value="mRNA"/>
</dbReference>
<dbReference type="EMBL" id="BC014858">
    <property type="protein sequence ID" value="AAH14858.1"/>
    <property type="molecule type" value="mRNA"/>
</dbReference>
<dbReference type="CCDS" id="CCDS26791.1"/>
<dbReference type="PIR" id="A29915">
    <property type="entry name" value="A29915"/>
</dbReference>
<dbReference type="RefSeq" id="NP_034460.3">
    <property type="nucleotide sequence ID" value="NM_010330.4"/>
</dbReference>
<dbReference type="SMR" id="P21995"/>
<dbReference type="BioGRID" id="199435">
    <property type="interactions" value="3"/>
</dbReference>
<dbReference type="FunCoup" id="P21995">
    <property type="interactions" value="637"/>
</dbReference>
<dbReference type="STRING" id="10090.ENSMUSP00000022242"/>
<dbReference type="GlyConnect" id="2281">
    <property type="glycosylation" value="13 N-Linked glycans (4 sites)"/>
</dbReference>
<dbReference type="GlyCosmos" id="P21995">
    <property type="glycosylation" value="9 sites, 12 glycans"/>
</dbReference>
<dbReference type="GlyGen" id="P21995">
    <property type="glycosylation" value="9 sites, 16 N-linked glycans (7 sites)"/>
</dbReference>
<dbReference type="iPTMnet" id="P21995"/>
<dbReference type="PhosphoSitePlus" id="P21995"/>
<dbReference type="SwissPalm" id="P21995"/>
<dbReference type="jPOST" id="P21995"/>
<dbReference type="PaxDb" id="10090-ENSMUSP00000022242"/>
<dbReference type="PeptideAtlas" id="P21995"/>
<dbReference type="ProteomicsDB" id="275606"/>
<dbReference type="Pumba" id="P21995"/>
<dbReference type="ABCD" id="P21995">
    <property type="antibodies" value="2 sequenced antibodies"/>
</dbReference>
<dbReference type="Antibodypedia" id="2626">
    <property type="antibodies" value="192 antibodies from 29 providers"/>
</dbReference>
<dbReference type="DNASU" id="13723"/>
<dbReference type="Ensembl" id="ENSMUST00000022242.9">
    <property type="protein sequence ID" value="ENSMUSP00000022242.8"/>
    <property type="gene ID" value="ENSMUSG00000021728.9"/>
</dbReference>
<dbReference type="GeneID" id="13723"/>
<dbReference type="KEGG" id="mmu:13723"/>
<dbReference type="UCSC" id="uc007rym.2">
    <property type="organism name" value="mouse"/>
</dbReference>
<dbReference type="AGR" id="MGI:95321"/>
<dbReference type="CTD" id="133418"/>
<dbReference type="MGI" id="MGI:95321">
    <property type="gene designation" value="Emb"/>
</dbReference>
<dbReference type="VEuPathDB" id="HostDB:ENSMUSG00000021728"/>
<dbReference type="eggNOG" id="ENOG502RXAE">
    <property type="taxonomic scope" value="Eukaryota"/>
</dbReference>
<dbReference type="GeneTree" id="ENSGT00940000158944"/>
<dbReference type="HOGENOM" id="CLU_065379_0_0_1"/>
<dbReference type="InParanoid" id="P21995"/>
<dbReference type="OMA" id="KGSYWCH"/>
<dbReference type="OrthoDB" id="9932757at2759"/>
<dbReference type="PhylomeDB" id="P21995"/>
<dbReference type="TreeFam" id="TF326759"/>
<dbReference type="Reactome" id="R-MMU-433692">
    <property type="pathway name" value="Proton-coupled monocarboxylate transport"/>
</dbReference>
<dbReference type="BioGRID-ORCS" id="13723">
    <property type="hits" value="1 hit in 77 CRISPR screens"/>
</dbReference>
<dbReference type="ChiTaRS" id="Emb">
    <property type="organism name" value="mouse"/>
</dbReference>
<dbReference type="PRO" id="PR:P21995"/>
<dbReference type="Proteomes" id="UP000000589">
    <property type="component" value="Chromosome 13"/>
</dbReference>
<dbReference type="RNAct" id="P21995">
    <property type="molecule type" value="protein"/>
</dbReference>
<dbReference type="Bgee" id="ENSMUSG00000021728">
    <property type="expression patterns" value="Expressed in primitive streak and 274 other cell types or tissues"/>
</dbReference>
<dbReference type="ExpressionAtlas" id="P21995">
    <property type="expression patterns" value="baseline and differential"/>
</dbReference>
<dbReference type="GO" id="GO:0005886">
    <property type="term" value="C:plasma membrane"/>
    <property type="evidence" value="ECO:0000250"/>
    <property type="project" value="UniProtKB"/>
</dbReference>
<dbReference type="GO" id="GO:0045202">
    <property type="term" value="C:synapse"/>
    <property type="evidence" value="ECO:0007669"/>
    <property type="project" value="UniProtKB-SubCell"/>
</dbReference>
<dbReference type="GO" id="GO:0035879">
    <property type="term" value="P:plasma membrane lactate transport"/>
    <property type="evidence" value="ECO:0000250"/>
    <property type="project" value="UniProtKB"/>
</dbReference>
<dbReference type="CDD" id="cd00096">
    <property type="entry name" value="Ig"/>
    <property type="match status" value="1"/>
</dbReference>
<dbReference type="FunFam" id="2.60.40.10:FF:001012">
    <property type="entry name" value="Embigin"/>
    <property type="match status" value="1"/>
</dbReference>
<dbReference type="FunFam" id="2.60.40.10:FF:001288">
    <property type="entry name" value="Embigin"/>
    <property type="match status" value="1"/>
</dbReference>
<dbReference type="Gene3D" id="2.60.40.10">
    <property type="entry name" value="Immunoglobulins"/>
    <property type="match status" value="2"/>
</dbReference>
<dbReference type="InterPro" id="IPR007110">
    <property type="entry name" value="Ig-like_dom"/>
</dbReference>
<dbReference type="InterPro" id="IPR036179">
    <property type="entry name" value="Ig-like_dom_sf"/>
</dbReference>
<dbReference type="InterPro" id="IPR013783">
    <property type="entry name" value="Ig-like_fold"/>
</dbReference>
<dbReference type="InterPro" id="IPR013098">
    <property type="entry name" value="Ig_I-set"/>
</dbReference>
<dbReference type="InterPro" id="IPR003599">
    <property type="entry name" value="Ig_sub"/>
</dbReference>
<dbReference type="PANTHER" id="PTHR10075">
    <property type="entry name" value="BASIGIN RELATED"/>
    <property type="match status" value="1"/>
</dbReference>
<dbReference type="PANTHER" id="PTHR10075:SF4">
    <property type="entry name" value="EMBIGIN"/>
    <property type="match status" value="1"/>
</dbReference>
<dbReference type="Pfam" id="PF07679">
    <property type="entry name" value="I-set"/>
    <property type="match status" value="1"/>
</dbReference>
<dbReference type="SMART" id="SM00409">
    <property type="entry name" value="IG"/>
    <property type="match status" value="2"/>
</dbReference>
<dbReference type="SUPFAM" id="SSF48726">
    <property type="entry name" value="Immunoglobulin"/>
    <property type="match status" value="2"/>
</dbReference>
<dbReference type="PROSITE" id="PS50835">
    <property type="entry name" value="IG_LIKE"/>
    <property type="match status" value="2"/>
</dbReference>
<sequence length="330" mass="37064">MRSHTGLRALVAPGYPLLLLCLLAATRPDPAEGDPTDPTFTSLPVREEMMAKYSNLSLKSCNISVTEKSNVSVEENVILEKPSHVELKCVYTATKDLNLMNVTWKKDDEPLETTGDFNTTKMGNTLTSQYRFIVFNSKQLGKYSCVFGEKELRGTFNIHVPKAHGKKKSLIAYVGDSTVLKCVCQDCLPLNWTWYMGNETAQVPIDAHSNEKYIINGSHANETRLKIKHLLEEDGGSYWCRATFQLGESEEQNELVVLSFLVPLKPFLAILAEVILLVAIILLCEVYTHKKKNDPDAGKEFEQIEQLKSDDSNGIENNVPRYRKTDSADQ</sequence>
<protein>
    <recommendedName>
        <fullName>Embigin</fullName>
    </recommendedName>
    <alternativeName>
        <fullName>Teratocarcinoma glycoprotein Gp-70</fullName>
    </alternativeName>
</protein>
<name>EMB_MOUSE</name>
<feature type="signal peptide" evidence="2">
    <location>
        <begin position="1"/>
        <end position="33"/>
    </location>
</feature>
<feature type="chain" id="PRO_0000014750" description="Embigin">
    <location>
        <begin position="34"/>
        <end position="330"/>
    </location>
</feature>
<feature type="topological domain" description="Extracellular" evidence="2">
    <location>
        <begin position="34"/>
        <end position="254"/>
    </location>
</feature>
<feature type="transmembrane region" description="Helical" evidence="2">
    <location>
        <begin position="255"/>
        <end position="283"/>
    </location>
</feature>
<feature type="topological domain" description="Cytoplasmic" evidence="2">
    <location>
        <begin position="284"/>
        <end position="330"/>
    </location>
</feature>
<feature type="domain" description="Ig-like V-type 1">
    <location>
        <begin position="38"/>
        <end position="161"/>
    </location>
</feature>
<feature type="domain" description="Ig-like V-type 2">
    <location>
        <begin position="162"/>
        <end position="256"/>
    </location>
</feature>
<feature type="region of interest" description="Disordered" evidence="4">
    <location>
        <begin position="293"/>
        <end position="330"/>
    </location>
</feature>
<feature type="compositionally biased region" description="Basic and acidic residues" evidence="4">
    <location>
        <begin position="293"/>
        <end position="311"/>
    </location>
</feature>
<feature type="modified residue" description="Phosphoserine" evidence="1">
    <location>
        <position position="312"/>
    </location>
</feature>
<feature type="glycosylation site" description="N-linked (GlcNAc...) asparagine" evidence="6 7">
    <location>
        <position position="55"/>
    </location>
</feature>
<feature type="glycosylation site" description="N-linked (GlcNAc...) asparagine" evidence="6">
    <location>
        <position position="62"/>
    </location>
</feature>
<feature type="glycosylation site" description="N-linked (GlcNAc...) asparagine" evidence="7">
    <location>
        <position position="70"/>
    </location>
</feature>
<feature type="glycosylation site" description="N-linked (GlcNAc...) asparagine" evidence="6 7">
    <location>
        <position position="101"/>
    </location>
</feature>
<feature type="glycosylation site" description="N-linked (GlcNAc...) asparagine" evidence="6 7">
    <location>
        <position position="118"/>
    </location>
</feature>
<feature type="glycosylation site" description="N-linked (GlcNAc...) asparagine" evidence="2">
    <location>
        <position position="191"/>
    </location>
</feature>
<feature type="glycosylation site" description="N-linked (GlcNAc...) asparagine" evidence="6 7">
    <location>
        <position position="198"/>
    </location>
</feature>
<feature type="glycosylation site" description="N-linked (GlcNAc...) asparagine" evidence="6 7">
    <location>
        <position position="216"/>
    </location>
</feature>
<feature type="glycosylation site" description="N-linked (GlcNAc...) asparagine" evidence="6 7">
    <location>
        <position position="221"/>
    </location>
</feature>
<feature type="disulfide bond" evidence="3">
    <location>
        <begin position="89"/>
        <end position="145"/>
    </location>
</feature>
<feature type="disulfide bond" evidence="3">
    <location>
        <begin position="182"/>
        <end position="240"/>
    </location>
</feature>
<feature type="sequence conflict" description="In Ref. 2; BAC40381." evidence="9" ref="2">
    <original>I</original>
    <variation>S</variation>
    <location>
        <position position="78"/>
    </location>
</feature>
<feature type="sequence conflict" description="In Ref. 2; BAC37687." evidence="9" ref="2">
    <original>N</original>
    <variation>S</variation>
    <location>
        <position position="98"/>
    </location>
</feature>
<feature type="sequence conflict" description="In Ref. 2; BAC40381." evidence="9" ref="2">
    <original>L</original>
    <variation>S</variation>
    <location>
        <position position="99"/>
    </location>
</feature>
<feature type="sequence conflict" description="In Ref. 1; AAA37730." evidence="9" ref="1">
    <original>KAHGK</original>
    <variation>QSSWE</variation>
    <location>
        <begin position="162"/>
        <end position="166"/>
    </location>
</feature>
<feature type="sequence conflict" description="In Ref. 1; AAA37730." evidence="9" ref="1">
    <original>D</original>
    <variation>G</variation>
    <location>
        <position position="294"/>
    </location>
</feature>
<comment type="function">
    <text evidence="1 5">Plays a role in targeting the monocarboxylate transporters SLC16A1, SLC16A6 and SLC16A7 to the cell membrane (By similarity). Plays a role in the outgrowth of motoneurons and in the formation of neuromuscular junctions. Following muscle denervation, promotes nerve terminal sprouting and the formation of additional acetylcholine receptor clusters at synaptic sites without affecting terminal Schwann cell number or morphology. Delays the retraction of terminal sprouts following re-innervation of denervated endplates.</text>
</comment>
<comment type="subunit">
    <text evidence="1">Interacts with SLC16A1, SLC16A6 and SLC16A7.</text>
</comment>
<comment type="subcellular location">
    <subcellularLocation>
        <location evidence="1">Cell membrane</location>
        <topology evidence="1">Single-pass type I membrane protein</topology>
    </subcellularLocation>
    <subcellularLocation>
        <location evidence="5">Synapse</location>
    </subcellularLocation>
    <text evidence="5">Localizes to the neuromuscular junctions.</text>
</comment>
<comment type="tissue specificity">
    <text evidence="8">Only member of the immunoglobulin superfamily to be expressed in embryonal carcinoma cells, which resemble multipotential cells of early embryos.</text>
</comment>
<comment type="developmental stage">
    <text evidence="5">At neuromuscular junctions, 5-fold higher expression levels at P0 compared to adult.</text>
</comment>
<comment type="induction">
    <text evidence="5">Regulated by muscle activity. Strongly up-regulated after muscle denervation, including that of gastrocnemius muscle. Maximal expression is observed 10 days after denervation (at protein level).</text>
</comment>
<evidence type="ECO:0000250" key="1">
    <source>
        <dbReference type="UniProtKB" id="O88775"/>
    </source>
</evidence>
<evidence type="ECO:0000255" key="2"/>
<evidence type="ECO:0000255" key="3">
    <source>
        <dbReference type="PROSITE-ProRule" id="PRU00114"/>
    </source>
</evidence>
<evidence type="ECO:0000256" key="4">
    <source>
        <dbReference type="SAM" id="MobiDB-lite"/>
    </source>
</evidence>
<evidence type="ECO:0000269" key="5">
    <source>
    </source>
</evidence>
<evidence type="ECO:0000269" key="6">
    <source>
    </source>
</evidence>
<evidence type="ECO:0000269" key="7">
    <source>
    </source>
</evidence>
<evidence type="ECO:0000269" key="8">
    <source>
    </source>
</evidence>
<evidence type="ECO:0000305" key="9"/>
<accession>P21995</accession>
<accession>Q3UFF1</accession>
<accession>Q8C2J8</accession>
<accession>Q8C543</accession>
<accession>Q96C38</accession>
<keyword id="KW-1003">Cell membrane</keyword>
<keyword id="KW-1015">Disulfide bond</keyword>
<keyword id="KW-0325">Glycoprotein</keyword>
<keyword id="KW-0393">Immunoglobulin domain</keyword>
<keyword id="KW-0472">Membrane</keyword>
<keyword id="KW-0597">Phosphoprotein</keyword>
<keyword id="KW-1185">Reference proteome</keyword>
<keyword id="KW-0677">Repeat</keyword>
<keyword id="KW-0732">Signal</keyword>
<keyword id="KW-0770">Synapse</keyword>
<keyword id="KW-0812">Transmembrane</keyword>
<keyword id="KW-1133">Transmembrane helix</keyword>
<organism>
    <name type="scientific">Mus musculus</name>
    <name type="common">Mouse</name>
    <dbReference type="NCBI Taxonomy" id="10090"/>
    <lineage>
        <taxon>Eukaryota</taxon>
        <taxon>Metazoa</taxon>
        <taxon>Chordata</taxon>
        <taxon>Craniata</taxon>
        <taxon>Vertebrata</taxon>
        <taxon>Euteleostomi</taxon>
        <taxon>Mammalia</taxon>
        <taxon>Eutheria</taxon>
        <taxon>Euarchontoglires</taxon>
        <taxon>Glires</taxon>
        <taxon>Rodentia</taxon>
        <taxon>Myomorpha</taxon>
        <taxon>Muroidea</taxon>
        <taxon>Muridae</taxon>
        <taxon>Murinae</taxon>
        <taxon>Mus</taxon>
        <taxon>Mus</taxon>
    </lineage>
</organism>
<reference key="1">
    <citation type="journal article" date="1988" name="J. Biol. Chem.">
        <title>A teratocarcinoma glycoprotein carrying a developmentally regulated carbohydrate marker is a member of the immunoglobulin gene superfamily.</title>
        <authorList>
            <person name="Ozawa M."/>
            <person name="Huang R.-P."/>
            <person name="Furukawa T."/>
            <person name="Muramatsu T."/>
        </authorList>
    </citation>
    <scope>NUCLEOTIDE SEQUENCE [MRNA]</scope>
    <scope>TISSUE SPECIFICITY</scope>
</reference>
<reference key="2">
    <citation type="journal article" date="2005" name="Science">
        <title>The transcriptional landscape of the mammalian genome.</title>
        <authorList>
            <person name="Carninci P."/>
            <person name="Kasukawa T."/>
            <person name="Katayama S."/>
            <person name="Gough J."/>
            <person name="Frith M.C."/>
            <person name="Maeda N."/>
            <person name="Oyama R."/>
            <person name="Ravasi T."/>
            <person name="Lenhard B."/>
            <person name="Wells C."/>
            <person name="Kodzius R."/>
            <person name="Shimokawa K."/>
            <person name="Bajic V.B."/>
            <person name="Brenner S.E."/>
            <person name="Batalov S."/>
            <person name="Forrest A.R."/>
            <person name="Zavolan M."/>
            <person name="Davis M.J."/>
            <person name="Wilming L.G."/>
            <person name="Aidinis V."/>
            <person name="Allen J.E."/>
            <person name="Ambesi-Impiombato A."/>
            <person name="Apweiler R."/>
            <person name="Aturaliya R.N."/>
            <person name="Bailey T.L."/>
            <person name="Bansal M."/>
            <person name="Baxter L."/>
            <person name="Beisel K.W."/>
            <person name="Bersano T."/>
            <person name="Bono H."/>
            <person name="Chalk A.M."/>
            <person name="Chiu K.P."/>
            <person name="Choudhary V."/>
            <person name="Christoffels A."/>
            <person name="Clutterbuck D.R."/>
            <person name="Crowe M.L."/>
            <person name="Dalla E."/>
            <person name="Dalrymple B.P."/>
            <person name="de Bono B."/>
            <person name="Della Gatta G."/>
            <person name="di Bernardo D."/>
            <person name="Down T."/>
            <person name="Engstrom P."/>
            <person name="Fagiolini M."/>
            <person name="Faulkner G."/>
            <person name="Fletcher C.F."/>
            <person name="Fukushima T."/>
            <person name="Furuno M."/>
            <person name="Futaki S."/>
            <person name="Gariboldi M."/>
            <person name="Georgii-Hemming P."/>
            <person name="Gingeras T.R."/>
            <person name="Gojobori T."/>
            <person name="Green R.E."/>
            <person name="Gustincich S."/>
            <person name="Harbers M."/>
            <person name="Hayashi Y."/>
            <person name="Hensch T.K."/>
            <person name="Hirokawa N."/>
            <person name="Hill D."/>
            <person name="Huminiecki L."/>
            <person name="Iacono M."/>
            <person name="Ikeo K."/>
            <person name="Iwama A."/>
            <person name="Ishikawa T."/>
            <person name="Jakt M."/>
            <person name="Kanapin A."/>
            <person name="Katoh M."/>
            <person name="Kawasawa Y."/>
            <person name="Kelso J."/>
            <person name="Kitamura H."/>
            <person name="Kitano H."/>
            <person name="Kollias G."/>
            <person name="Krishnan S.P."/>
            <person name="Kruger A."/>
            <person name="Kummerfeld S.K."/>
            <person name="Kurochkin I.V."/>
            <person name="Lareau L.F."/>
            <person name="Lazarevic D."/>
            <person name="Lipovich L."/>
            <person name="Liu J."/>
            <person name="Liuni S."/>
            <person name="McWilliam S."/>
            <person name="Madan Babu M."/>
            <person name="Madera M."/>
            <person name="Marchionni L."/>
            <person name="Matsuda H."/>
            <person name="Matsuzawa S."/>
            <person name="Miki H."/>
            <person name="Mignone F."/>
            <person name="Miyake S."/>
            <person name="Morris K."/>
            <person name="Mottagui-Tabar S."/>
            <person name="Mulder N."/>
            <person name="Nakano N."/>
            <person name="Nakauchi H."/>
            <person name="Ng P."/>
            <person name="Nilsson R."/>
            <person name="Nishiguchi S."/>
            <person name="Nishikawa S."/>
            <person name="Nori F."/>
            <person name="Ohara O."/>
            <person name="Okazaki Y."/>
            <person name="Orlando V."/>
            <person name="Pang K.C."/>
            <person name="Pavan W.J."/>
            <person name="Pavesi G."/>
            <person name="Pesole G."/>
            <person name="Petrovsky N."/>
            <person name="Piazza S."/>
            <person name="Reed J."/>
            <person name="Reid J.F."/>
            <person name="Ring B.Z."/>
            <person name="Ringwald M."/>
            <person name="Rost B."/>
            <person name="Ruan Y."/>
            <person name="Salzberg S.L."/>
            <person name="Sandelin A."/>
            <person name="Schneider C."/>
            <person name="Schoenbach C."/>
            <person name="Sekiguchi K."/>
            <person name="Semple C.A."/>
            <person name="Seno S."/>
            <person name="Sessa L."/>
            <person name="Sheng Y."/>
            <person name="Shibata Y."/>
            <person name="Shimada H."/>
            <person name="Shimada K."/>
            <person name="Silva D."/>
            <person name="Sinclair B."/>
            <person name="Sperling S."/>
            <person name="Stupka E."/>
            <person name="Sugiura K."/>
            <person name="Sultana R."/>
            <person name="Takenaka Y."/>
            <person name="Taki K."/>
            <person name="Tammoja K."/>
            <person name="Tan S.L."/>
            <person name="Tang S."/>
            <person name="Taylor M.S."/>
            <person name="Tegner J."/>
            <person name="Teichmann S.A."/>
            <person name="Ueda H.R."/>
            <person name="van Nimwegen E."/>
            <person name="Verardo R."/>
            <person name="Wei C.L."/>
            <person name="Yagi K."/>
            <person name="Yamanishi H."/>
            <person name="Zabarovsky E."/>
            <person name="Zhu S."/>
            <person name="Zimmer A."/>
            <person name="Hide W."/>
            <person name="Bult C."/>
            <person name="Grimmond S.M."/>
            <person name="Teasdale R.D."/>
            <person name="Liu E.T."/>
            <person name="Brusic V."/>
            <person name="Quackenbush J."/>
            <person name="Wahlestedt C."/>
            <person name="Mattick J.S."/>
            <person name="Hume D.A."/>
            <person name="Kai C."/>
            <person name="Sasaki D."/>
            <person name="Tomaru Y."/>
            <person name="Fukuda S."/>
            <person name="Kanamori-Katayama M."/>
            <person name="Suzuki M."/>
            <person name="Aoki J."/>
            <person name="Arakawa T."/>
            <person name="Iida J."/>
            <person name="Imamura K."/>
            <person name="Itoh M."/>
            <person name="Kato T."/>
            <person name="Kawaji H."/>
            <person name="Kawagashira N."/>
            <person name="Kawashima T."/>
            <person name="Kojima M."/>
            <person name="Kondo S."/>
            <person name="Konno H."/>
            <person name="Nakano K."/>
            <person name="Ninomiya N."/>
            <person name="Nishio T."/>
            <person name="Okada M."/>
            <person name="Plessy C."/>
            <person name="Shibata K."/>
            <person name="Shiraki T."/>
            <person name="Suzuki S."/>
            <person name="Tagami M."/>
            <person name="Waki K."/>
            <person name="Watahiki A."/>
            <person name="Okamura-Oho Y."/>
            <person name="Suzuki H."/>
            <person name="Kawai J."/>
            <person name="Hayashizaki Y."/>
        </authorList>
    </citation>
    <scope>NUCLEOTIDE SEQUENCE [LARGE SCALE MRNA]</scope>
    <source>
        <strain>C57BL/6J</strain>
        <strain>NOD</strain>
        <tissue>Bone marrow</tissue>
        <tissue>Hypothalamus</tissue>
        <tissue>Pancreas</tissue>
        <tissue>Thymus</tissue>
    </source>
</reference>
<reference key="3">
    <citation type="journal article" date="2004" name="Genome Res.">
        <title>The status, quality, and expansion of the NIH full-length cDNA project: the Mammalian Gene Collection (MGC).</title>
        <authorList>
            <consortium name="The MGC Project Team"/>
        </authorList>
    </citation>
    <scope>NUCLEOTIDE SEQUENCE [LARGE SCALE MRNA]</scope>
    <source>
        <tissue>Eye</tissue>
    </source>
</reference>
<reference key="4">
    <citation type="journal article" date="2009" name="J. Biol. Chem.">
        <title>A novel role for embigin to promote sprouting of motor nerve terminals at the neuromuscular junction.</title>
        <authorList>
            <person name="Lain E."/>
            <person name="Carnejac S."/>
            <person name="Escher P."/>
            <person name="Wilson M.C."/>
            <person name="Lomo T."/>
            <person name="Gajendran N."/>
            <person name="Brenner H.R."/>
        </authorList>
    </citation>
    <scope>FUNCTION</scope>
    <scope>SUBCELLULAR LOCATION</scope>
    <scope>DEVELOPMENTAL STAGE</scope>
    <scope>INDUCTION</scope>
</reference>
<reference key="5">
    <citation type="journal article" date="2009" name="Mol. Cell. Proteomics">
        <title>The mouse C2C12 myoblast cell surface N-linked glycoproteome: identification, glycosite occupancy, and membrane orientation.</title>
        <authorList>
            <person name="Gundry R.L."/>
            <person name="Raginski K."/>
            <person name="Tarasova Y."/>
            <person name="Tchernyshyov I."/>
            <person name="Bausch-Fluck D."/>
            <person name="Elliott S.T."/>
            <person name="Boheler K.R."/>
            <person name="Van Eyk J.E."/>
            <person name="Wollscheid B."/>
        </authorList>
    </citation>
    <scope>GLYCOSYLATION [LARGE SCALE ANALYSIS] AT ASN-55; ASN-70; ASN-101; ASN-118; ASN-198; ASN-216 AND ASN-221</scope>
    <source>
        <tissue>Myoblast</tissue>
    </source>
</reference>
<reference key="6">
    <citation type="journal article" date="2009" name="Nat. Biotechnol.">
        <title>Mass-spectrometric identification and relative quantification of N-linked cell surface glycoproteins.</title>
        <authorList>
            <person name="Wollscheid B."/>
            <person name="Bausch-Fluck D."/>
            <person name="Henderson C."/>
            <person name="O'Brien R."/>
            <person name="Bibel M."/>
            <person name="Schiess R."/>
            <person name="Aebersold R."/>
            <person name="Watts J.D."/>
        </authorList>
    </citation>
    <scope>GLYCOSYLATION [LARGE SCALE ANALYSIS] AT ASN-55; ASN-62; ASN-101; ASN-118; ASN-198; ASN-216 AND ASN-221</scope>
</reference>
<reference key="7">
    <citation type="journal article" date="2010" name="Cell">
        <title>A tissue-specific atlas of mouse protein phosphorylation and expression.</title>
        <authorList>
            <person name="Huttlin E.L."/>
            <person name="Jedrychowski M.P."/>
            <person name="Elias J.E."/>
            <person name="Goswami T."/>
            <person name="Rad R."/>
            <person name="Beausoleil S.A."/>
            <person name="Villen J."/>
            <person name="Haas W."/>
            <person name="Sowa M.E."/>
            <person name="Gygi S.P."/>
        </authorList>
    </citation>
    <scope>IDENTIFICATION BY MASS SPECTROMETRY [LARGE SCALE ANALYSIS]</scope>
    <source>
        <tissue>Brain</tissue>
        <tissue>Kidney</tissue>
        <tissue>Lung</tissue>
        <tissue>Testis</tissue>
    </source>
</reference>